<protein>
    <recommendedName>
        <fullName>Rhodopsin</fullName>
    </recommendedName>
</protein>
<name>OPSD_CAMSC</name>
<feature type="chain" id="PRO_0000197740" description="Rhodopsin">
    <location>
        <begin position="1" status="less than"/>
        <end position="301" status="greater than"/>
    </location>
</feature>
<feature type="topological domain" description="Extracellular" evidence="6">
    <location>
        <begin position="1" status="less than"/>
        <end position="18"/>
    </location>
</feature>
<feature type="transmembrane region" description="Helical; Name=1" evidence="1">
    <location>
        <begin position="19"/>
        <end position="43"/>
    </location>
</feature>
<feature type="topological domain" description="Cytoplasmic" evidence="6">
    <location>
        <begin position="44"/>
        <end position="55"/>
    </location>
</feature>
<feature type="transmembrane region" description="Helical; Name=2" evidence="1">
    <location>
        <begin position="56"/>
        <end position="78"/>
    </location>
</feature>
<feature type="topological domain" description="Extracellular" evidence="6">
    <location>
        <begin position="79"/>
        <end position="92"/>
    </location>
</feature>
<feature type="transmembrane region" description="Helical; Name=3" evidence="1">
    <location>
        <begin position="93"/>
        <end position="115"/>
    </location>
</feature>
<feature type="topological domain" description="Cytoplasmic" evidence="6">
    <location>
        <begin position="116"/>
        <end position="134"/>
    </location>
</feature>
<feature type="transmembrane region" description="Helical; Name=4" evidence="1">
    <location>
        <begin position="135"/>
        <end position="155"/>
    </location>
</feature>
<feature type="topological domain" description="Extracellular" evidence="6">
    <location>
        <begin position="156"/>
        <end position="182"/>
    </location>
</feature>
<feature type="transmembrane region" description="Helical; Name=5" evidence="1">
    <location>
        <begin position="183"/>
        <end position="204"/>
    </location>
</feature>
<feature type="topological domain" description="Cytoplasmic" evidence="6">
    <location>
        <begin position="205"/>
        <end position="245"/>
    </location>
</feature>
<feature type="transmembrane region" description="Helical; Name=6" evidence="1">
    <location>
        <begin position="246"/>
        <end position="267"/>
    </location>
</feature>
<feature type="topological domain" description="Extracellular" evidence="6">
    <location>
        <begin position="268"/>
        <end position="278"/>
    </location>
</feature>
<feature type="transmembrane region" description="Helical; Name=7" evidence="1">
    <location>
        <begin position="279"/>
        <end position="300"/>
    </location>
</feature>
<feature type="short sequence motif" description="'Ionic lock' involved in activated form stabilization" evidence="1">
    <location>
        <begin position="116"/>
        <end position="118"/>
    </location>
</feature>
<feature type="modified residue" description="N6-(retinylidene)lysine" evidence="1">
    <location>
        <position position="288"/>
    </location>
</feature>
<feature type="glycosylation site" description="N-linked (GlcNAc...) asparagine" evidence="4">
    <location>
        <position position="165"/>
    </location>
</feature>
<feature type="disulfide bond" evidence="5">
    <location>
        <begin position="92"/>
        <end position="169"/>
    </location>
</feature>
<feature type="non-terminal residue">
    <location>
        <position position="1"/>
    </location>
</feature>
<feature type="non-terminal residue">
    <location>
        <position position="301"/>
    </location>
</feature>
<accession>O16018</accession>
<proteinExistence type="inferred from homology"/>
<organism>
    <name type="scientific">Cambarellus shufeldtii</name>
    <name type="common">Cajun dwarf crayfish</name>
    <dbReference type="NCBI Taxonomy" id="60963"/>
    <lineage>
        <taxon>Eukaryota</taxon>
        <taxon>Metazoa</taxon>
        <taxon>Ecdysozoa</taxon>
        <taxon>Arthropoda</taxon>
        <taxon>Crustacea</taxon>
        <taxon>Multicrustacea</taxon>
        <taxon>Malacostraca</taxon>
        <taxon>Eumalacostraca</taxon>
        <taxon>Eucarida</taxon>
        <taxon>Decapoda</taxon>
        <taxon>Pleocyemata</taxon>
        <taxon>Astacidea</taxon>
        <taxon>Astacoidea</taxon>
        <taxon>Cambaridae</taxon>
        <taxon>Cambarellus</taxon>
        <taxon>Dirigicambarus</taxon>
    </lineage>
</organism>
<keyword id="KW-1003">Cell membrane</keyword>
<keyword id="KW-0966">Cell projection</keyword>
<keyword id="KW-0157">Chromophore</keyword>
<keyword id="KW-1015">Disulfide bond</keyword>
<keyword id="KW-0297">G-protein coupled receptor</keyword>
<keyword id="KW-0325">Glycoprotein</keyword>
<keyword id="KW-0472">Membrane</keyword>
<keyword id="KW-0597">Phosphoprotein</keyword>
<keyword id="KW-0600">Photoreceptor protein</keyword>
<keyword id="KW-0675">Receptor</keyword>
<keyword id="KW-0681">Retinal protein</keyword>
<keyword id="KW-0716">Sensory transduction</keyword>
<keyword id="KW-0807">Transducer</keyword>
<keyword id="KW-0812">Transmembrane</keyword>
<keyword id="KW-1133">Transmembrane helix</keyword>
<keyword id="KW-0844">Vision</keyword>
<dbReference type="EMBL" id="AF003544">
    <property type="protein sequence ID" value="AAB97666.1"/>
    <property type="molecule type" value="Genomic_DNA"/>
</dbReference>
<dbReference type="SMR" id="O16018"/>
<dbReference type="GlyCosmos" id="O16018">
    <property type="glycosylation" value="1 site, No reported glycans"/>
</dbReference>
<dbReference type="GO" id="GO:0042995">
    <property type="term" value="C:cell projection"/>
    <property type="evidence" value="ECO:0007669"/>
    <property type="project" value="UniProtKB-KW"/>
</dbReference>
<dbReference type="GO" id="GO:0005886">
    <property type="term" value="C:plasma membrane"/>
    <property type="evidence" value="ECO:0000250"/>
    <property type="project" value="UniProtKB"/>
</dbReference>
<dbReference type="GO" id="GO:0004930">
    <property type="term" value="F:G protein-coupled receptor activity"/>
    <property type="evidence" value="ECO:0007669"/>
    <property type="project" value="UniProtKB-KW"/>
</dbReference>
<dbReference type="GO" id="GO:0009881">
    <property type="term" value="F:photoreceptor activity"/>
    <property type="evidence" value="ECO:0007669"/>
    <property type="project" value="UniProtKB-KW"/>
</dbReference>
<dbReference type="GO" id="GO:0007602">
    <property type="term" value="P:phototransduction"/>
    <property type="evidence" value="ECO:0007669"/>
    <property type="project" value="UniProtKB-KW"/>
</dbReference>
<dbReference type="GO" id="GO:0007601">
    <property type="term" value="P:visual perception"/>
    <property type="evidence" value="ECO:0007669"/>
    <property type="project" value="UniProtKB-KW"/>
</dbReference>
<dbReference type="FunFam" id="1.20.1070.10:FF:000044">
    <property type="entry name" value="Opsin, ultraviolet-sensitive"/>
    <property type="match status" value="1"/>
</dbReference>
<dbReference type="Gene3D" id="1.20.1070.10">
    <property type="entry name" value="Rhodopsin 7-helix transmembrane proteins"/>
    <property type="match status" value="1"/>
</dbReference>
<dbReference type="InterPro" id="IPR050125">
    <property type="entry name" value="GPCR_opsins"/>
</dbReference>
<dbReference type="InterPro" id="IPR000276">
    <property type="entry name" value="GPCR_Rhodpsn"/>
</dbReference>
<dbReference type="InterPro" id="IPR017452">
    <property type="entry name" value="GPCR_Rhodpsn_7TM"/>
</dbReference>
<dbReference type="InterPro" id="IPR001760">
    <property type="entry name" value="Opsin"/>
</dbReference>
<dbReference type="InterPro" id="IPR001391">
    <property type="entry name" value="Opsin_lateye"/>
</dbReference>
<dbReference type="InterPro" id="IPR027430">
    <property type="entry name" value="Retinal_BS"/>
</dbReference>
<dbReference type="PANTHER" id="PTHR24240">
    <property type="entry name" value="OPSIN"/>
    <property type="match status" value="1"/>
</dbReference>
<dbReference type="Pfam" id="PF00001">
    <property type="entry name" value="7tm_1"/>
    <property type="match status" value="1"/>
</dbReference>
<dbReference type="PRINTS" id="PR00237">
    <property type="entry name" value="GPCRRHODOPSN"/>
</dbReference>
<dbReference type="PRINTS" id="PR00238">
    <property type="entry name" value="OPSIN"/>
</dbReference>
<dbReference type="PRINTS" id="PR00578">
    <property type="entry name" value="OPSINLTRLEYE"/>
</dbReference>
<dbReference type="SUPFAM" id="SSF81321">
    <property type="entry name" value="Family A G protein-coupled receptor-like"/>
    <property type="match status" value="1"/>
</dbReference>
<dbReference type="PROSITE" id="PS00237">
    <property type="entry name" value="G_PROTEIN_RECEP_F1_1"/>
    <property type="match status" value="1"/>
</dbReference>
<dbReference type="PROSITE" id="PS50262">
    <property type="entry name" value="G_PROTEIN_RECEP_F1_2"/>
    <property type="match status" value="1"/>
</dbReference>
<dbReference type="PROSITE" id="PS00238">
    <property type="entry name" value="OPSIN"/>
    <property type="match status" value="1"/>
</dbReference>
<sequence>LHMIHLHWYQYPPMNPMMYPLLLIFMFITGIPCLAGNFVTIWVFMTTKSLRSPANLLVVNLAMSDFLMMFTMFPPMMITCYYHTWTLGPTFCQVYAFLGNLFGCTSIWTMVFITFDRYNVIVKGVAGEPLSNKKAALWILSAWVLSFSWCSAPFFGWNRYVPEGNLTGCGTDYLSEDALSRSYLYVYSVWVYFLPLLITIYCYVFIIKAVAAHEKGMRDQAKKMGIKSLRNEEAQKTSAECRLAKIAMTTVALWFIAWTPYLLINWVGMFARSYLSPVYTIWGYVFAKANAVYNPIVYAIS</sequence>
<reference key="1">
    <citation type="journal article" date="1997" name="Nature">
        <title>Rhodopsin evolution in the dark.</title>
        <authorList>
            <person name="Crandall K.A."/>
            <person name="Hillis D.M."/>
        </authorList>
    </citation>
    <scope>NUCLEOTIDE SEQUENCE [GENOMIC DNA]</scope>
</reference>
<reference key="2">
    <citation type="journal article" date="1997" name="J. Mol. Evol.">
        <title>The molecular evolution of visual pigments of freshwater crayfishes (Decapoda: Cambaridae).</title>
        <authorList>
            <person name="Crandall K.A."/>
            <person name="Cronin T.W."/>
        </authorList>
    </citation>
    <scope>NUCLEOTIDE SEQUENCE [GENOMIC DNA]</scope>
</reference>
<comment type="function">
    <text evidence="3">Photoreceptor required for image-forming vision at low light intensity. Can use both retinal and 3-dehydroretinal as visual pigment. Light-induced isomerization of 11-cis to all-trans retinal triggers a conformational change that activates signaling via G-proteins. Signaling via GNAQ probably mediates the activation of phospholipase C.</text>
</comment>
<comment type="subunit">
    <text evidence="3">Homodimer. Interacts with GNAQ.</text>
</comment>
<comment type="subcellular location">
    <subcellularLocation>
        <location evidence="3">Cell projection</location>
        <location evidence="3">Rhabdomere membrane</location>
        <topology evidence="2">Multi-pass membrane protein</topology>
    </subcellularLocation>
</comment>
<comment type="PTM">
    <text evidence="1">Contains one covalently linked retinal chromophore.</text>
</comment>
<comment type="similarity">
    <text evidence="5">Belongs to the G-protein coupled receptor 1 family. Opsin subfamily.</text>
</comment>
<evidence type="ECO:0000250" key="1">
    <source>
        <dbReference type="UniProtKB" id="P02699"/>
    </source>
</evidence>
<evidence type="ECO:0000250" key="2">
    <source>
        <dbReference type="UniProtKB" id="P31356"/>
    </source>
</evidence>
<evidence type="ECO:0000250" key="3">
    <source>
        <dbReference type="UniProtKB" id="P35356"/>
    </source>
</evidence>
<evidence type="ECO:0000255" key="4"/>
<evidence type="ECO:0000255" key="5">
    <source>
        <dbReference type="PROSITE-ProRule" id="PRU00521"/>
    </source>
</evidence>
<evidence type="ECO:0000305" key="6"/>
<gene>
    <name type="primary">RHO</name>
</gene>